<protein>
    <recommendedName>
        <fullName evidence="1">Small ribosomal subunit protein uS19</fullName>
    </recommendedName>
    <alternativeName>
        <fullName evidence="2">30S ribosomal protein S19</fullName>
    </alternativeName>
</protein>
<organism>
    <name type="scientific">Streptococcus pyogenes serotype M5 (strain Manfredo)</name>
    <dbReference type="NCBI Taxonomy" id="160491"/>
    <lineage>
        <taxon>Bacteria</taxon>
        <taxon>Bacillati</taxon>
        <taxon>Bacillota</taxon>
        <taxon>Bacilli</taxon>
        <taxon>Lactobacillales</taxon>
        <taxon>Streptococcaceae</taxon>
        <taxon>Streptococcus</taxon>
    </lineage>
</organism>
<gene>
    <name evidence="1" type="primary">rpsS</name>
    <name type="ordered locus">SpyM50048</name>
</gene>
<proteinExistence type="inferred from homology"/>
<accession>A2RC18</accession>
<sequence length="92" mass="10622">MGRSLKKGPFVDEHLMKKVEAQANDEKKKVIKTWSRRSTIFPSFIGYTIAVYDGRKHVPVYIQEDMVGHKLGEFAPTRTYKGHAADDKKTRR</sequence>
<evidence type="ECO:0000255" key="1">
    <source>
        <dbReference type="HAMAP-Rule" id="MF_00531"/>
    </source>
</evidence>
<evidence type="ECO:0000305" key="2"/>
<feature type="chain" id="PRO_1000051132" description="Small ribosomal subunit protein uS19">
    <location>
        <begin position="1"/>
        <end position="92"/>
    </location>
</feature>
<name>RS19_STRPG</name>
<dbReference type="EMBL" id="AM295007">
    <property type="protein sequence ID" value="CAM29390.1"/>
    <property type="molecule type" value="Genomic_DNA"/>
</dbReference>
<dbReference type="RefSeq" id="WP_000533765.1">
    <property type="nucleotide sequence ID" value="NC_009332.1"/>
</dbReference>
<dbReference type="SMR" id="A2RC18"/>
<dbReference type="GeneID" id="98392396"/>
<dbReference type="KEGG" id="spf:SpyM50048"/>
<dbReference type="HOGENOM" id="CLU_144911_0_1_9"/>
<dbReference type="GO" id="GO:0005737">
    <property type="term" value="C:cytoplasm"/>
    <property type="evidence" value="ECO:0007669"/>
    <property type="project" value="UniProtKB-ARBA"/>
</dbReference>
<dbReference type="GO" id="GO:0015935">
    <property type="term" value="C:small ribosomal subunit"/>
    <property type="evidence" value="ECO:0007669"/>
    <property type="project" value="InterPro"/>
</dbReference>
<dbReference type="GO" id="GO:0019843">
    <property type="term" value="F:rRNA binding"/>
    <property type="evidence" value="ECO:0007669"/>
    <property type="project" value="UniProtKB-UniRule"/>
</dbReference>
<dbReference type="GO" id="GO:0003735">
    <property type="term" value="F:structural constituent of ribosome"/>
    <property type="evidence" value="ECO:0007669"/>
    <property type="project" value="InterPro"/>
</dbReference>
<dbReference type="GO" id="GO:0000028">
    <property type="term" value="P:ribosomal small subunit assembly"/>
    <property type="evidence" value="ECO:0007669"/>
    <property type="project" value="TreeGrafter"/>
</dbReference>
<dbReference type="GO" id="GO:0006412">
    <property type="term" value="P:translation"/>
    <property type="evidence" value="ECO:0007669"/>
    <property type="project" value="UniProtKB-UniRule"/>
</dbReference>
<dbReference type="FunFam" id="3.30.860.10:FF:000001">
    <property type="entry name" value="30S ribosomal protein S19"/>
    <property type="match status" value="1"/>
</dbReference>
<dbReference type="Gene3D" id="3.30.860.10">
    <property type="entry name" value="30s Ribosomal Protein S19, Chain A"/>
    <property type="match status" value="1"/>
</dbReference>
<dbReference type="HAMAP" id="MF_00531">
    <property type="entry name" value="Ribosomal_uS19"/>
    <property type="match status" value="1"/>
</dbReference>
<dbReference type="InterPro" id="IPR002222">
    <property type="entry name" value="Ribosomal_uS19"/>
</dbReference>
<dbReference type="InterPro" id="IPR005732">
    <property type="entry name" value="Ribosomal_uS19_bac-type"/>
</dbReference>
<dbReference type="InterPro" id="IPR020934">
    <property type="entry name" value="Ribosomal_uS19_CS"/>
</dbReference>
<dbReference type="InterPro" id="IPR023575">
    <property type="entry name" value="Ribosomal_uS19_SF"/>
</dbReference>
<dbReference type="NCBIfam" id="TIGR01050">
    <property type="entry name" value="rpsS_bact"/>
    <property type="match status" value="1"/>
</dbReference>
<dbReference type="PANTHER" id="PTHR11880">
    <property type="entry name" value="RIBOSOMAL PROTEIN S19P FAMILY MEMBER"/>
    <property type="match status" value="1"/>
</dbReference>
<dbReference type="PANTHER" id="PTHR11880:SF8">
    <property type="entry name" value="SMALL RIBOSOMAL SUBUNIT PROTEIN US19M"/>
    <property type="match status" value="1"/>
</dbReference>
<dbReference type="Pfam" id="PF00203">
    <property type="entry name" value="Ribosomal_S19"/>
    <property type="match status" value="1"/>
</dbReference>
<dbReference type="PIRSF" id="PIRSF002144">
    <property type="entry name" value="Ribosomal_S19"/>
    <property type="match status" value="1"/>
</dbReference>
<dbReference type="PRINTS" id="PR00975">
    <property type="entry name" value="RIBOSOMALS19"/>
</dbReference>
<dbReference type="SUPFAM" id="SSF54570">
    <property type="entry name" value="Ribosomal protein S19"/>
    <property type="match status" value="1"/>
</dbReference>
<dbReference type="PROSITE" id="PS00323">
    <property type="entry name" value="RIBOSOMAL_S19"/>
    <property type="match status" value="1"/>
</dbReference>
<comment type="function">
    <text evidence="1">Protein S19 forms a complex with S13 that binds strongly to the 16S ribosomal RNA.</text>
</comment>
<comment type="similarity">
    <text evidence="1">Belongs to the universal ribosomal protein uS19 family.</text>
</comment>
<reference key="1">
    <citation type="journal article" date="2007" name="J. Bacteriol.">
        <title>Complete genome of acute rheumatic fever-associated serotype M5 Streptococcus pyogenes strain Manfredo.</title>
        <authorList>
            <person name="Holden M.T.G."/>
            <person name="Scott A."/>
            <person name="Cherevach I."/>
            <person name="Chillingworth T."/>
            <person name="Churcher C."/>
            <person name="Cronin A."/>
            <person name="Dowd L."/>
            <person name="Feltwell T."/>
            <person name="Hamlin N."/>
            <person name="Holroyd S."/>
            <person name="Jagels K."/>
            <person name="Moule S."/>
            <person name="Mungall K."/>
            <person name="Quail M.A."/>
            <person name="Price C."/>
            <person name="Rabbinowitsch E."/>
            <person name="Sharp S."/>
            <person name="Skelton J."/>
            <person name="Whitehead S."/>
            <person name="Barrell B.G."/>
            <person name="Kehoe M."/>
            <person name="Parkhill J."/>
        </authorList>
    </citation>
    <scope>NUCLEOTIDE SEQUENCE [LARGE SCALE GENOMIC DNA]</scope>
    <source>
        <strain>Manfredo</strain>
    </source>
</reference>
<keyword id="KW-0687">Ribonucleoprotein</keyword>
<keyword id="KW-0689">Ribosomal protein</keyword>
<keyword id="KW-0694">RNA-binding</keyword>
<keyword id="KW-0699">rRNA-binding</keyword>